<dbReference type="EC" id="3.6.1.-" evidence="1"/>
<dbReference type="EMBL" id="CP001113">
    <property type="protein sequence ID" value="ACF61791.1"/>
    <property type="molecule type" value="Genomic_DNA"/>
</dbReference>
<dbReference type="RefSeq" id="WP_000940994.1">
    <property type="nucleotide sequence ID" value="NZ_CCMR01000001.1"/>
</dbReference>
<dbReference type="SMR" id="B4SYE7"/>
<dbReference type="KEGG" id="see:SNSL254_A4162"/>
<dbReference type="HOGENOM" id="CLU_018678_1_0_6"/>
<dbReference type="Proteomes" id="UP000008824">
    <property type="component" value="Chromosome"/>
</dbReference>
<dbReference type="GO" id="GO:0005737">
    <property type="term" value="C:cytoplasm"/>
    <property type="evidence" value="ECO:0007669"/>
    <property type="project" value="UniProtKB-SubCell"/>
</dbReference>
<dbReference type="GO" id="GO:0005524">
    <property type="term" value="F:ATP binding"/>
    <property type="evidence" value="ECO:0007669"/>
    <property type="project" value="UniProtKB-KW"/>
</dbReference>
<dbReference type="GO" id="GO:0016887">
    <property type="term" value="F:ATP hydrolysis activity"/>
    <property type="evidence" value="ECO:0007669"/>
    <property type="project" value="UniProtKB-UniRule"/>
</dbReference>
<dbReference type="CDD" id="cd00009">
    <property type="entry name" value="AAA"/>
    <property type="match status" value="1"/>
</dbReference>
<dbReference type="FunFam" id="3.40.50.300:FF:000410">
    <property type="entry name" value="ATPase RavA"/>
    <property type="match status" value="1"/>
</dbReference>
<dbReference type="Gene3D" id="1.20.58.1510">
    <property type="match status" value="1"/>
</dbReference>
<dbReference type="Gene3D" id="2.40.128.430">
    <property type="match status" value="1"/>
</dbReference>
<dbReference type="Gene3D" id="3.40.50.300">
    <property type="entry name" value="P-loop containing nucleotide triphosphate hydrolases"/>
    <property type="match status" value="1"/>
</dbReference>
<dbReference type="HAMAP" id="MF_01625">
    <property type="entry name" value="ATPase_RavA"/>
    <property type="match status" value="1"/>
</dbReference>
<dbReference type="InterPro" id="IPR003593">
    <property type="entry name" value="AAA+_ATPase"/>
</dbReference>
<dbReference type="InterPro" id="IPR023671">
    <property type="entry name" value="ATPase_RavA"/>
</dbReference>
<dbReference type="InterPro" id="IPR022547">
    <property type="entry name" value="ATPase_RavA_C"/>
</dbReference>
<dbReference type="InterPro" id="IPR045427">
    <property type="entry name" value="MoxR"/>
</dbReference>
<dbReference type="InterPro" id="IPR027417">
    <property type="entry name" value="P-loop_NTPase"/>
</dbReference>
<dbReference type="InterPro" id="IPR041538">
    <property type="entry name" value="RavA-like_AAA_lid"/>
</dbReference>
<dbReference type="InterPro" id="IPR050513">
    <property type="entry name" value="RavA_ATPases"/>
</dbReference>
<dbReference type="InterPro" id="IPR046898">
    <property type="entry name" value="RavA_LARA_dom"/>
</dbReference>
<dbReference type="InterPro" id="IPR046932">
    <property type="entry name" value="RavA_LARA_sf"/>
</dbReference>
<dbReference type="NCBIfam" id="NF010054">
    <property type="entry name" value="PRK13531.1"/>
    <property type="match status" value="1"/>
</dbReference>
<dbReference type="PANTHER" id="PTHR32204">
    <property type="entry name" value="ATPASE RAVA"/>
    <property type="match status" value="1"/>
</dbReference>
<dbReference type="PANTHER" id="PTHR32204:SF0">
    <property type="entry name" value="ATPASE RAVA"/>
    <property type="match status" value="1"/>
</dbReference>
<dbReference type="Pfam" id="PF17868">
    <property type="entry name" value="AAA_lid_8"/>
    <property type="match status" value="1"/>
</dbReference>
<dbReference type="Pfam" id="PF12592">
    <property type="entry name" value="ATPase_RavA_C"/>
    <property type="match status" value="1"/>
</dbReference>
<dbReference type="Pfam" id="PF20030">
    <property type="entry name" value="bpMoxR"/>
    <property type="match status" value="1"/>
</dbReference>
<dbReference type="Pfam" id="PF20265">
    <property type="entry name" value="LARA_dom"/>
    <property type="match status" value="1"/>
</dbReference>
<dbReference type="SMART" id="SM00382">
    <property type="entry name" value="AAA"/>
    <property type="match status" value="1"/>
</dbReference>
<dbReference type="SUPFAM" id="SSF52540">
    <property type="entry name" value="P-loop containing nucleoside triphosphate hydrolases"/>
    <property type="match status" value="1"/>
</dbReference>
<protein>
    <recommendedName>
        <fullName evidence="1">Regulatory ATPase RavA</fullName>
        <ecNumber evidence="1">3.6.1.-</ecNumber>
    </recommendedName>
    <alternativeName>
        <fullName evidence="1">Regulatory ATPase variant A</fullName>
    </alternativeName>
</protein>
<reference key="1">
    <citation type="journal article" date="2011" name="J. Bacteriol.">
        <title>Comparative genomics of 28 Salmonella enterica isolates: evidence for CRISPR-mediated adaptive sublineage evolution.</title>
        <authorList>
            <person name="Fricke W.F."/>
            <person name="Mammel M.K."/>
            <person name="McDermott P.F."/>
            <person name="Tartera C."/>
            <person name="White D.G."/>
            <person name="Leclerc J.E."/>
            <person name="Ravel J."/>
            <person name="Cebula T.A."/>
        </authorList>
    </citation>
    <scope>NUCLEOTIDE SEQUENCE [LARGE SCALE GENOMIC DNA]</scope>
    <source>
        <strain>SL254</strain>
    </source>
</reference>
<comment type="function">
    <text evidence="1">Component of the RavA-ViaA chaperone complex, which may act on the membrane to optimize the function of some of the respiratory chains. RavA functions as an ATPase.</text>
</comment>
<comment type="catalytic activity">
    <reaction evidence="1">
        <text>ATP + H2O = ADP + phosphate + H(+)</text>
        <dbReference type="Rhea" id="RHEA:13065"/>
        <dbReference type="ChEBI" id="CHEBI:15377"/>
        <dbReference type="ChEBI" id="CHEBI:15378"/>
        <dbReference type="ChEBI" id="CHEBI:30616"/>
        <dbReference type="ChEBI" id="CHEBI:43474"/>
        <dbReference type="ChEBI" id="CHEBI:456216"/>
    </reaction>
</comment>
<comment type="activity regulation">
    <text evidence="1">ATPase activity is stimulated by ViaA.</text>
</comment>
<comment type="subunit">
    <text evidence="1">Homohexamer. Interacts with ViaA.</text>
</comment>
<comment type="subcellular location">
    <subcellularLocation>
        <location evidence="1">Cytoplasm</location>
    </subcellularLocation>
</comment>
<comment type="similarity">
    <text evidence="1">Belongs to the RavA family.</text>
</comment>
<name>RAVA_SALNS</name>
<gene>
    <name evidence="1" type="primary">ravA</name>
    <name type="ordered locus">SNSL254_A4162</name>
</gene>
<proteinExistence type="inferred from homology"/>
<evidence type="ECO:0000255" key="1">
    <source>
        <dbReference type="HAMAP-Rule" id="MF_01625"/>
    </source>
</evidence>
<organism>
    <name type="scientific">Salmonella newport (strain SL254)</name>
    <dbReference type="NCBI Taxonomy" id="423368"/>
    <lineage>
        <taxon>Bacteria</taxon>
        <taxon>Pseudomonadati</taxon>
        <taxon>Pseudomonadota</taxon>
        <taxon>Gammaproteobacteria</taxon>
        <taxon>Enterobacterales</taxon>
        <taxon>Enterobacteriaceae</taxon>
        <taxon>Salmonella</taxon>
    </lineage>
</organism>
<keyword id="KW-0067">ATP-binding</keyword>
<keyword id="KW-0143">Chaperone</keyword>
<keyword id="KW-0963">Cytoplasm</keyword>
<keyword id="KW-0378">Hydrolase</keyword>
<keyword id="KW-0547">Nucleotide-binding</keyword>
<accession>B4SYE7</accession>
<feature type="chain" id="PRO_1000186134" description="Regulatory ATPase RavA">
    <location>
        <begin position="1"/>
        <end position="498"/>
    </location>
</feature>
<feature type="binding site" evidence="1">
    <location>
        <position position="23"/>
    </location>
    <ligand>
        <name>ADP</name>
        <dbReference type="ChEBI" id="CHEBI:456216"/>
    </ligand>
</feature>
<feature type="binding site" evidence="1">
    <location>
        <position position="49"/>
    </location>
    <ligand>
        <name>ADP</name>
        <dbReference type="ChEBI" id="CHEBI:456216"/>
    </ligand>
</feature>
<feature type="binding site" evidence="1">
    <location>
        <position position="50"/>
    </location>
    <ligand>
        <name>ADP</name>
        <dbReference type="ChEBI" id="CHEBI:456216"/>
    </ligand>
</feature>
<feature type="binding site" evidence="1">
    <location>
        <position position="51"/>
    </location>
    <ligand>
        <name>ADP</name>
        <dbReference type="ChEBI" id="CHEBI:456216"/>
    </ligand>
</feature>
<feature type="binding site" evidence="1">
    <location>
        <position position="52"/>
    </location>
    <ligand>
        <name>ADP</name>
        <dbReference type="ChEBI" id="CHEBI:456216"/>
    </ligand>
</feature>
<feature type="binding site" evidence="1">
    <location>
        <position position="53"/>
    </location>
    <ligand>
        <name>ADP</name>
        <dbReference type="ChEBI" id="CHEBI:456216"/>
    </ligand>
</feature>
<feature type="binding site" evidence="1">
    <location>
        <position position="54"/>
    </location>
    <ligand>
        <name>ADP</name>
        <dbReference type="ChEBI" id="CHEBI:456216"/>
    </ligand>
</feature>
<feature type="binding site" evidence="1">
    <location>
        <position position="196"/>
    </location>
    <ligand>
        <name>ADP</name>
        <dbReference type="ChEBI" id="CHEBI:456216"/>
    </ligand>
</feature>
<sequence>MAHPHLLAERISRLSSALEKGLYERSHAIRLCLLAALSGESVFLLGPPGIAKSLIARRLKFAFQRARAFEYLMTRFSTPEEVFGPLSIQALKDEGRYERLTTGYLPEAEIVFLDEIWKAGPAILNTLLTAINERHFRNGAFEEKIPMRLLVAASNELPEADSSLEALYDRMLIRLWLDKVQDKANFRSMLVSQQDESDNPVPASLQVSDEEYQQWQKDIGAISLPDPVFELIFTLRQQLDNLPNAPYVSDRRWKKAIRLLQASAFFSGRDAVAPIDLILLKDCLWYDAQSLNLMQQQLEILMTGHAWQQQAMLTRLGGIVQRRLQLQQQQSDKTAFTVIKEGGMFSRRPHYTLPPEVSASTLTLLLQKPLKLHDMEVIHITFDRSALELWLTKGGEIRGKLNGIGFAQTLNMEVDNAQHLVVRDISLQGTRLALPGTAEDSMPAEIKQQLETLENDWRQQHTRFSEQQHCLFIHSDWLGRIEASLQDVGEQIRQAKQC</sequence>